<organism>
    <name type="scientific">Buchnera aphidicola subsp. Schizaphis graminum (strain Sg)</name>
    <dbReference type="NCBI Taxonomy" id="198804"/>
    <lineage>
        <taxon>Bacteria</taxon>
        <taxon>Pseudomonadati</taxon>
        <taxon>Pseudomonadota</taxon>
        <taxon>Gammaproteobacteria</taxon>
        <taxon>Enterobacterales</taxon>
        <taxon>Erwiniaceae</taxon>
        <taxon>Buchnera</taxon>
    </lineage>
</organism>
<accession>Q8K9Z8</accession>
<keyword id="KW-0521">NADP</keyword>
<keyword id="KW-0554">One-carbon metabolism</keyword>
<keyword id="KW-0560">Oxidoreductase</keyword>
<comment type="function">
    <text evidence="1">Key enzyme in folate metabolism. Catalyzes an essential reaction for de novo glycine and purine synthesis, and for DNA precursor synthesis (By similarity).</text>
</comment>
<comment type="catalytic activity">
    <reaction evidence="2">
        <text>(6S)-5,6,7,8-tetrahydrofolate + NADP(+) = 7,8-dihydrofolate + NADPH + H(+)</text>
        <dbReference type="Rhea" id="RHEA:15009"/>
        <dbReference type="ChEBI" id="CHEBI:15378"/>
        <dbReference type="ChEBI" id="CHEBI:57451"/>
        <dbReference type="ChEBI" id="CHEBI:57453"/>
        <dbReference type="ChEBI" id="CHEBI:57783"/>
        <dbReference type="ChEBI" id="CHEBI:58349"/>
        <dbReference type="EC" id="1.5.1.3"/>
    </reaction>
</comment>
<comment type="pathway">
    <text>Cofactor biosynthesis; tetrahydrofolate biosynthesis; 5,6,7,8-tetrahydrofolate from 7,8-dihydrofolate: step 1/1.</text>
</comment>
<comment type="similarity">
    <text evidence="3">Belongs to the dihydrofolate reductase family.</text>
</comment>
<sequence length="161" mass="19113">MKISLISAISNNLVIGHNNKIPWYLPEDLKWFKKNTIHKDIIMGRLTWESILNHPLPMRKNIVISHKEIIHKDVIWANSISKALLSTTYDKEIMVIGGSKIYKQMLFYATKLYLTHVDFNGIGDTYFPQYKSCKFWKTIFRKQHFKDKNNPYNFCFEILSR</sequence>
<evidence type="ECO:0000250" key="1"/>
<evidence type="ECO:0000255" key="2">
    <source>
        <dbReference type="PROSITE-ProRule" id="PRU00660"/>
    </source>
</evidence>
<evidence type="ECO:0000305" key="3"/>
<reference key="1">
    <citation type="journal article" date="2002" name="Science">
        <title>50 million years of genomic stasis in endosymbiotic bacteria.</title>
        <authorList>
            <person name="Tamas I."/>
            <person name="Klasson L."/>
            <person name="Canbaeck B."/>
            <person name="Naeslund A.K."/>
            <person name="Eriksson A.-S."/>
            <person name="Wernegreen J.J."/>
            <person name="Sandstroem J.P."/>
            <person name="Moran N.A."/>
            <person name="Andersson S.G.E."/>
        </authorList>
    </citation>
    <scope>NUCLEOTIDE SEQUENCE [LARGE SCALE GENOMIC DNA]</scope>
    <source>
        <strain>Sg</strain>
    </source>
</reference>
<protein>
    <recommendedName>
        <fullName>Dihydrofolate reductase</fullName>
        <ecNumber>1.5.1.3</ecNumber>
    </recommendedName>
</protein>
<proteinExistence type="inferred from homology"/>
<name>DYR_BUCAP</name>
<gene>
    <name type="primary">folA</name>
    <name type="ordered locus">BUsg_136</name>
</gene>
<feature type="chain" id="PRO_0000186384" description="Dihydrofolate reductase">
    <location>
        <begin position="1"/>
        <end position="161"/>
    </location>
</feature>
<feature type="domain" description="DHFR" evidence="2">
    <location>
        <begin position="2"/>
        <end position="161"/>
    </location>
</feature>
<feature type="binding site" evidence="1">
    <location>
        <begin position="6"/>
        <end position="8"/>
    </location>
    <ligand>
        <name>substrate</name>
    </ligand>
</feature>
<feature type="binding site" evidence="1">
    <location>
        <begin position="7"/>
        <end position="8"/>
    </location>
    <ligand>
        <name>NADP(+)</name>
        <dbReference type="ChEBI" id="CHEBI:58349"/>
    </ligand>
</feature>
<feature type="binding site" evidence="1">
    <location>
        <begin position="15"/>
        <end position="20"/>
    </location>
    <ligand>
        <name>NADP(+)</name>
        <dbReference type="ChEBI" id="CHEBI:58349"/>
    </ligand>
</feature>
<feature type="binding site" evidence="1">
    <location>
        <position position="28"/>
    </location>
    <ligand>
        <name>substrate</name>
    </ligand>
</feature>
<feature type="binding site" evidence="1">
    <location>
        <begin position="44"/>
        <end position="47"/>
    </location>
    <ligand>
        <name>NADP(+)</name>
        <dbReference type="ChEBI" id="CHEBI:58349"/>
    </ligand>
</feature>
<feature type="binding site" evidence="1">
    <location>
        <position position="59"/>
    </location>
    <ligand>
        <name>substrate</name>
    </ligand>
</feature>
<feature type="binding site" evidence="1">
    <location>
        <begin position="64"/>
        <end position="66"/>
    </location>
    <ligand>
        <name>NADP(+)</name>
        <dbReference type="ChEBI" id="CHEBI:58349"/>
    </ligand>
</feature>
<feature type="binding site" evidence="1">
    <location>
        <begin position="96"/>
        <end position="101"/>
    </location>
    <ligand>
        <name>NADP(+)</name>
        <dbReference type="ChEBI" id="CHEBI:58349"/>
    </ligand>
</feature>
<feature type="binding site" evidence="1">
    <location>
        <position position="115"/>
    </location>
    <ligand>
        <name>substrate</name>
    </ligand>
</feature>
<dbReference type="EC" id="1.5.1.3"/>
<dbReference type="EMBL" id="AE013218">
    <property type="protein sequence ID" value="AAM67704.1"/>
    <property type="molecule type" value="Genomic_DNA"/>
</dbReference>
<dbReference type="RefSeq" id="WP_011053671.1">
    <property type="nucleotide sequence ID" value="NC_004061.1"/>
</dbReference>
<dbReference type="SMR" id="Q8K9Z8"/>
<dbReference type="STRING" id="198804.BUsg_136"/>
<dbReference type="GeneID" id="93003606"/>
<dbReference type="KEGG" id="bas:BUsg_136"/>
<dbReference type="eggNOG" id="COG0262">
    <property type="taxonomic scope" value="Bacteria"/>
</dbReference>
<dbReference type="HOGENOM" id="CLU_043966_5_1_6"/>
<dbReference type="UniPathway" id="UPA00077">
    <property type="reaction ID" value="UER00158"/>
</dbReference>
<dbReference type="Proteomes" id="UP000000416">
    <property type="component" value="Chromosome"/>
</dbReference>
<dbReference type="GO" id="GO:0005829">
    <property type="term" value="C:cytosol"/>
    <property type="evidence" value="ECO:0007669"/>
    <property type="project" value="TreeGrafter"/>
</dbReference>
<dbReference type="GO" id="GO:0004146">
    <property type="term" value="F:dihydrofolate reductase activity"/>
    <property type="evidence" value="ECO:0007669"/>
    <property type="project" value="UniProtKB-EC"/>
</dbReference>
<dbReference type="GO" id="GO:0050661">
    <property type="term" value="F:NADP binding"/>
    <property type="evidence" value="ECO:0007669"/>
    <property type="project" value="InterPro"/>
</dbReference>
<dbReference type="GO" id="GO:0046452">
    <property type="term" value="P:dihydrofolate metabolic process"/>
    <property type="evidence" value="ECO:0007669"/>
    <property type="project" value="TreeGrafter"/>
</dbReference>
<dbReference type="GO" id="GO:0046655">
    <property type="term" value="P:folic acid metabolic process"/>
    <property type="evidence" value="ECO:0007669"/>
    <property type="project" value="TreeGrafter"/>
</dbReference>
<dbReference type="GO" id="GO:0006730">
    <property type="term" value="P:one-carbon metabolic process"/>
    <property type="evidence" value="ECO:0007669"/>
    <property type="project" value="UniProtKB-KW"/>
</dbReference>
<dbReference type="GO" id="GO:0046654">
    <property type="term" value="P:tetrahydrofolate biosynthetic process"/>
    <property type="evidence" value="ECO:0007669"/>
    <property type="project" value="UniProtKB-UniPathway"/>
</dbReference>
<dbReference type="CDD" id="cd00209">
    <property type="entry name" value="DHFR"/>
    <property type="match status" value="1"/>
</dbReference>
<dbReference type="FunFam" id="3.40.430.10:FF:000001">
    <property type="entry name" value="Dihydrofolate reductase"/>
    <property type="match status" value="1"/>
</dbReference>
<dbReference type="Gene3D" id="3.40.430.10">
    <property type="entry name" value="Dihydrofolate Reductase, subunit A"/>
    <property type="match status" value="1"/>
</dbReference>
<dbReference type="InterPro" id="IPR012259">
    <property type="entry name" value="DHFR"/>
</dbReference>
<dbReference type="InterPro" id="IPR024072">
    <property type="entry name" value="DHFR-like_dom_sf"/>
</dbReference>
<dbReference type="InterPro" id="IPR017925">
    <property type="entry name" value="DHFR_CS"/>
</dbReference>
<dbReference type="InterPro" id="IPR001796">
    <property type="entry name" value="DHFR_dom"/>
</dbReference>
<dbReference type="NCBIfam" id="NF008037">
    <property type="entry name" value="PRK10769.1"/>
    <property type="match status" value="1"/>
</dbReference>
<dbReference type="PANTHER" id="PTHR48069">
    <property type="entry name" value="DIHYDROFOLATE REDUCTASE"/>
    <property type="match status" value="1"/>
</dbReference>
<dbReference type="PANTHER" id="PTHR48069:SF3">
    <property type="entry name" value="DIHYDROFOLATE REDUCTASE"/>
    <property type="match status" value="1"/>
</dbReference>
<dbReference type="Pfam" id="PF00186">
    <property type="entry name" value="DHFR_1"/>
    <property type="match status" value="1"/>
</dbReference>
<dbReference type="PIRSF" id="PIRSF000194">
    <property type="entry name" value="DHFR"/>
    <property type="match status" value="1"/>
</dbReference>
<dbReference type="PRINTS" id="PR00070">
    <property type="entry name" value="DHFR"/>
</dbReference>
<dbReference type="SUPFAM" id="SSF53597">
    <property type="entry name" value="Dihydrofolate reductase-like"/>
    <property type="match status" value="1"/>
</dbReference>
<dbReference type="PROSITE" id="PS00075">
    <property type="entry name" value="DHFR_1"/>
    <property type="match status" value="1"/>
</dbReference>
<dbReference type="PROSITE" id="PS51330">
    <property type="entry name" value="DHFR_2"/>
    <property type="match status" value="1"/>
</dbReference>